<gene>
    <name evidence="1" type="primary">psbY</name>
</gene>
<feature type="chain" id="PRO_0000277148" description="Photosystem II reaction center protein Y">
    <location>
        <begin position="1"/>
        <end position="35"/>
    </location>
</feature>
<feature type="topological domain" description="Lumenal" evidence="1">
    <location>
        <begin position="1"/>
        <end position="4"/>
    </location>
</feature>
<feature type="transmembrane region" description="Helical" evidence="1">
    <location>
        <begin position="5"/>
        <end position="23"/>
    </location>
</feature>
<feature type="topological domain" description="Stromal" evidence="1">
    <location>
        <begin position="24"/>
        <end position="35"/>
    </location>
</feature>
<protein>
    <recommendedName>
        <fullName evidence="1">Photosystem II reaction center protein Y</fullName>
    </recommendedName>
</protein>
<sequence>MDTRLLVVLLPVATAAAWALFNIGRLALQQLKRMS</sequence>
<keyword id="KW-0150">Chloroplast</keyword>
<keyword id="KW-0472">Membrane</keyword>
<keyword id="KW-0602">Photosynthesis</keyword>
<keyword id="KW-0604">Photosystem II</keyword>
<keyword id="KW-0934">Plastid</keyword>
<keyword id="KW-0793">Thylakoid</keyword>
<keyword id="KW-0812">Transmembrane</keyword>
<keyword id="KW-1133">Transmembrane helix</keyword>
<accession>Q4G385</accession>
<proteinExistence type="inferred from homology"/>
<reference key="1">
    <citation type="journal article" date="2005" name="DNA Res.">
        <title>The complete plastid genome sequence of the haptophyte Emiliania huxleyi: a comparison to other plastid genomes.</title>
        <authorList>
            <person name="Sanchez-Puerta M.V."/>
            <person name="Bachvaroff T.R."/>
            <person name="Delwiche C.F."/>
        </authorList>
    </citation>
    <scope>NUCLEOTIDE SEQUENCE [LARGE SCALE GENOMIC DNA]</scope>
    <source>
        <strain>CCMP373 / CSIRO-CS-57 / BT6</strain>
    </source>
</reference>
<geneLocation type="chloroplast"/>
<dbReference type="EMBL" id="AY741371">
    <property type="protein sequence ID" value="AAX13881.1"/>
    <property type="molecule type" value="Genomic_DNA"/>
</dbReference>
<dbReference type="RefSeq" id="YP_277382.1">
    <property type="nucleotide sequence ID" value="NC_007288.1"/>
</dbReference>
<dbReference type="SMR" id="Q4G385"/>
<dbReference type="STRING" id="2903.Q4G385"/>
<dbReference type="GO" id="GO:0009535">
    <property type="term" value="C:chloroplast thylakoid membrane"/>
    <property type="evidence" value="ECO:0007669"/>
    <property type="project" value="UniProtKB-SubCell"/>
</dbReference>
<dbReference type="GO" id="GO:0009523">
    <property type="term" value="C:photosystem II"/>
    <property type="evidence" value="ECO:0007669"/>
    <property type="project" value="UniProtKB-KW"/>
</dbReference>
<dbReference type="GO" id="GO:0030145">
    <property type="term" value="F:manganese ion binding"/>
    <property type="evidence" value="ECO:0007669"/>
    <property type="project" value="InterPro"/>
</dbReference>
<dbReference type="GO" id="GO:0015979">
    <property type="term" value="P:photosynthesis"/>
    <property type="evidence" value="ECO:0007669"/>
    <property type="project" value="UniProtKB-UniRule"/>
</dbReference>
<dbReference type="HAMAP" id="MF_00717">
    <property type="entry name" value="PSII_PsbY"/>
    <property type="match status" value="1"/>
</dbReference>
<dbReference type="InterPro" id="IPR009388">
    <property type="entry name" value="PSII_PsbY"/>
</dbReference>
<dbReference type="NCBIfam" id="NF009711">
    <property type="entry name" value="PRK13240.1"/>
    <property type="match status" value="1"/>
</dbReference>
<dbReference type="Pfam" id="PF06298">
    <property type="entry name" value="PsbY"/>
    <property type="match status" value="1"/>
</dbReference>
<comment type="function">
    <text evidence="1">Loosely associated component of the core of photosystem II (PSII), it is not always seen in crystals. PSII is a light-driven water plastoquinone oxidoreductase, using light energy to abstract electrons from H(2)O, generating a proton gradient subsequently used for ATP formation.</text>
</comment>
<comment type="subunit">
    <text evidence="1">PSII is composed of 1 copy each of membrane proteins PsbA, PsbB, PsbC, PsbD, PsbE, PsbF, PsbH, PsbI, PsbJ, PsbK, PsbL, PsbM, PsbT, PsbX, PsbY, PsbZ, Psb30/Ycf12, at least 3 peripheral proteins of the oxygen-evolving complex and a large number of cofactors. It forms dimeric complexes.</text>
</comment>
<comment type="subcellular location">
    <subcellularLocation>
        <location evidence="1">Plastid</location>
        <location evidence="1">Chloroplast thylakoid membrane</location>
        <topology evidence="1">Single-pass membrane protein</topology>
    </subcellularLocation>
</comment>
<comment type="similarity">
    <text evidence="1">Belongs to the PsbY family.</text>
</comment>
<evidence type="ECO:0000255" key="1">
    <source>
        <dbReference type="HAMAP-Rule" id="MF_00717"/>
    </source>
</evidence>
<name>PSBY_EMIHU</name>
<organism>
    <name type="scientific">Emiliania huxleyi</name>
    <name type="common">Coccolithophore</name>
    <name type="synonym">Pontosphaera huxleyi</name>
    <dbReference type="NCBI Taxonomy" id="2903"/>
    <lineage>
        <taxon>Eukaryota</taxon>
        <taxon>Haptista</taxon>
        <taxon>Haptophyta</taxon>
        <taxon>Prymnesiophyceae</taxon>
        <taxon>Isochrysidales</taxon>
        <taxon>Noelaerhabdaceae</taxon>
        <taxon>Emiliania</taxon>
    </lineage>
</organism>